<dbReference type="EC" id="3.1.3.-" evidence="3 4"/>
<dbReference type="EMBL" id="M15058">
    <property type="protein sequence ID" value="AAA48265.1"/>
    <property type="molecule type" value="Genomic_DNA"/>
</dbReference>
<dbReference type="EMBL" id="AY243312">
    <property type="protein sequence ID" value="AAO89393.1"/>
    <property type="molecule type" value="Genomic_DNA"/>
</dbReference>
<dbReference type="PIR" id="A03885">
    <property type="entry name" value="QQVZ15"/>
</dbReference>
<dbReference type="RefSeq" id="YP_232996.1">
    <property type="nucleotide sequence ID" value="NC_006998.1"/>
</dbReference>
<dbReference type="PDB" id="7SEZ">
    <property type="method" value="X-ray"/>
    <property type="resolution" value="1.70 A"/>
    <property type="chains" value="A=1-213"/>
</dbReference>
<dbReference type="PDB" id="7SF0">
    <property type="method" value="X-ray"/>
    <property type="resolution" value="1.95 A"/>
    <property type="chains" value="A=1-213"/>
</dbReference>
<dbReference type="PDB" id="7T7H">
    <property type="method" value="X-ray"/>
    <property type="resolution" value="1.78 A"/>
    <property type="chains" value="A/B=1-213"/>
</dbReference>
<dbReference type="PDBsum" id="7SEZ"/>
<dbReference type="PDBsum" id="7SF0"/>
<dbReference type="PDBsum" id="7T7H"/>
<dbReference type="SMR" id="P04311"/>
<dbReference type="DIP" id="DIP-2192N"/>
<dbReference type="IntAct" id="P04311">
    <property type="interactions" value="1"/>
</dbReference>
<dbReference type="MINT" id="P04311"/>
<dbReference type="DNASU" id="3707570"/>
<dbReference type="GeneID" id="3707570"/>
<dbReference type="KEGG" id="vg:3707570"/>
<dbReference type="Proteomes" id="UP000000344">
    <property type="component" value="Genome"/>
</dbReference>
<dbReference type="GO" id="GO:0016787">
    <property type="term" value="F:hydrolase activity"/>
    <property type="evidence" value="ECO:0007669"/>
    <property type="project" value="UniProtKB-KW"/>
</dbReference>
<dbReference type="GO" id="GO:0046872">
    <property type="term" value="F:metal ion binding"/>
    <property type="evidence" value="ECO:0007669"/>
    <property type="project" value="UniProtKB-KW"/>
</dbReference>
<dbReference type="Gene3D" id="3.90.79.10">
    <property type="entry name" value="Nucleoside Triphosphate Pyrophosphohydrolase"/>
    <property type="match status" value="1"/>
</dbReference>
<dbReference type="InterPro" id="IPR015797">
    <property type="entry name" value="NUDIX_hydrolase-like_dom_sf"/>
</dbReference>
<dbReference type="InterPro" id="IPR000086">
    <property type="entry name" value="NUDIX_hydrolase_dom"/>
</dbReference>
<dbReference type="InterPro" id="IPR003300">
    <property type="entry name" value="Viral_VD9"/>
</dbReference>
<dbReference type="Pfam" id="PF00293">
    <property type="entry name" value="NUDIX"/>
    <property type="match status" value="1"/>
</dbReference>
<dbReference type="PRINTS" id="PR01363">
    <property type="entry name" value="VD09PROTEIN"/>
</dbReference>
<dbReference type="SUPFAM" id="SSF55811">
    <property type="entry name" value="Nudix"/>
    <property type="match status" value="1"/>
</dbReference>
<dbReference type="PROSITE" id="PS51462">
    <property type="entry name" value="NUDIX"/>
    <property type="match status" value="1"/>
</dbReference>
<dbReference type="PROSITE" id="PS00893">
    <property type="entry name" value="NUDIX_BOX"/>
    <property type="match status" value="1"/>
</dbReference>
<protein>
    <recommendedName>
        <fullName>mRNA-decapping protein OPG121</fullName>
        <ecNumber evidence="3 4">3.1.3.-</ecNumber>
    </recommendedName>
</protein>
<accession>P04311</accession>
<accession>Q76ZR8</accession>
<evidence type="ECO:0000250" key="1"/>
<evidence type="ECO:0000255" key="2">
    <source>
        <dbReference type="PROSITE-ProRule" id="PRU00794"/>
    </source>
</evidence>
<evidence type="ECO:0000269" key="3">
    <source>
    </source>
</evidence>
<evidence type="ECO:0000269" key="4">
    <source>
    </source>
</evidence>
<evidence type="ECO:0000305" key="5"/>
<evidence type="ECO:0007829" key="6">
    <source>
        <dbReference type="PDB" id="7SEZ"/>
    </source>
</evidence>
<evidence type="ECO:0007829" key="7">
    <source>
        <dbReference type="PDB" id="7SF0"/>
    </source>
</evidence>
<evidence type="ECO:0007829" key="8">
    <source>
        <dbReference type="PDB" id="7T7H"/>
    </source>
</evidence>
<organism>
    <name type="scientific">Vaccinia virus (strain Western Reserve)</name>
    <name type="common">VACV</name>
    <name type="synonym">Vaccinia virus (strain WR)</name>
    <dbReference type="NCBI Taxonomy" id="10254"/>
    <lineage>
        <taxon>Viruses</taxon>
        <taxon>Varidnaviria</taxon>
        <taxon>Bamfordvirae</taxon>
        <taxon>Nucleocytoviricota</taxon>
        <taxon>Pokkesviricetes</taxon>
        <taxon>Chitovirales</taxon>
        <taxon>Poxviridae</taxon>
        <taxon>Chordopoxvirinae</taxon>
        <taxon>Orthopoxvirus</taxon>
        <taxon>Vaccinia virus</taxon>
    </lineage>
</organism>
<gene>
    <name type="primary">OPG121</name>
    <name type="ordered locus">VACWR114</name>
    <name type="ORF">D9R</name>
</gene>
<feature type="chain" id="PRO_0000057093" description="mRNA-decapping protein OPG121">
    <location>
        <begin position="1"/>
        <end position="213"/>
    </location>
</feature>
<feature type="domain" description="Nudix hydrolase" evidence="2">
    <location>
        <begin position="30"/>
        <end position="209"/>
    </location>
</feature>
<feature type="short sequence motif" description="Nudix box" evidence="2">
    <location>
        <begin position="111"/>
        <end position="132"/>
    </location>
</feature>
<feature type="active site" description="Nucleophile" evidence="1">
    <location>
        <position position="126"/>
    </location>
</feature>
<feature type="binding site" evidence="4">
    <location>
        <position position="16"/>
    </location>
    <ligand>
        <name>N(7)-methyl-GTP</name>
        <dbReference type="ChEBI" id="CHEBI:87133"/>
    </ligand>
</feature>
<feature type="binding site" evidence="4">
    <location>
        <position position="50"/>
    </location>
    <ligand>
        <name>N(7)-methyl-GTP</name>
        <dbReference type="ChEBI" id="CHEBI:87133"/>
    </ligand>
</feature>
<feature type="binding site" evidence="4">
    <location>
        <position position="126"/>
    </location>
    <ligand>
        <name>Mg(2+)</name>
        <dbReference type="ChEBI" id="CHEBI:18420"/>
    </ligand>
</feature>
<feature type="binding site" evidence="4">
    <location>
        <position position="130"/>
    </location>
    <ligand>
        <name>Mg(2+)</name>
        <dbReference type="ChEBI" id="CHEBI:18420"/>
    </ligand>
</feature>
<feature type="binding site" evidence="4">
    <location>
        <position position="151"/>
    </location>
    <ligand>
        <name>N(7)-methyl-GTP</name>
        <dbReference type="ChEBI" id="CHEBI:87133"/>
    </ligand>
</feature>
<feature type="binding site" evidence="4">
    <location>
        <position position="183"/>
    </location>
    <ligand>
        <name>Mg(2+)</name>
        <dbReference type="ChEBI" id="CHEBI:18420"/>
    </ligand>
</feature>
<feature type="mutagenesis site" description="About 50% loss of mRNA decapping activity." evidence="4">
    <original>F</original>
    <variation>A</variation>
    <location>
        <position position="54"/>
    </location>
</feature>
<feature type="mutagenesis site" description="Complete loss of mRNA decapping activity." evidence="3">
    <original>E</original>
    <variation>Q</variation>
    <location>
        <position position="126"/>
    </location>
</feature>
<feature type="mutagenesis site" description="Complete loss of mRNA decapping activity." evidence="3">
    <original>EE</original>
    <variation>QQ</variation>
    <location>
        <begin position="129"/>
        <end position="130"/>
    </location>
</feature>
<feature type="mutagenesis site" description="About 98% loss of mRNA decapping activity." evidence="4">
    <original>Y</original>
    <variation>A</variation>
    <location>
        <position position="158"/>
    </location>
</feature>
<feature type="strand" evidence="6">
    <location>
        <begin position="8"/>
        <end position="12"/>
    </location>
</feature>
<feature type="strand" evidence="6">
    <location>
        <begin position="14"/>
        <end position="24"/>
    </location>
</feature>
<feature type="strand" evidence="6">
    <location>
        <begin position="29"/>
        <end position="31"/>
    </location>
</feature>
<feature type="strand" evidence="6">
    <location>
        <begin position="33"/>
        <end position="39"/>
    </location>
</feature>
<feature type="strand" evidence="6">
    <location>
        <begin position="45"/>
        <end position="52"/>
    </location>
</feature>
<feature type="helix" evidence="6">
    <location>
        <begin position="54"/>
        <end position="61"/>
    </location>
</feature>
<feature type="helix" evidence="6">
    <location>
        <begin position="73"/>
        <end position="78"/>
    </location>
</feature>
<feature type="helix" evidence="6">
    <location>
        <begin position="81"/>
        <end position="88"/>
    </location>
</feature>
<feature type="turn" evidence="6">
    <location>
        <begin position="89"/>
        <end position="91"/>
    </location>
</feature>
<feature type="strand" evidence="6">
    <location>
        <begin position="109"/>
        <end position="112"/>
    </location>
</feature>
<feature type="strand" evidence="8">
    <location>
        <begin position="115"/>
        <end position="117"/>
    </location>
</feature>
<feature type="helix" evidence="6">
    <location>
        <begin position="119"/>
        <end position="130"/>
    </location>
</feature>
<feature type="turn" evidence="6">
    <location>
        <begin position="131"/>
        <end position="133"/>
    </location>
</feature>
<feature type="strand" evidence="6">
    <location>
        <begin position="137"/>
        <end position="151"/>
    </location>
</feature>
<feature type="turn" evidence="6">
    <location>
        <begin position="152"/>
        <end position="155"/>
    </location>
</feature>
<feature type="strand" evidence="6">
    <location>
        <begin position="156"/>
        <end position="169"/>
    </location>
</feature>
<feature type="helix" evidence="6">
    <location>
        <begin position="172"/>
        <end position="174"/>
    </location>
</feature>
<feature type="strand" evidence="7">
    <location>
        <begin position="175"/>
        <end position="177"/>
    </location>
</feature>
<feature type="strand" evidence="6">
    <location>
        <begin position="182"/>
        <end position="189"/>
    </location>
</feature>
<feature type="helix" evidence="6">
    <location>
        <begin position="190"/>
        <end position="192"/>
    </location>
</feature>
<feature type="helix" evidence="6">
    <location>
        <begin position="199"/>
        <end position="210"/>
    </location>
</feature>
<comment type="function">
    <text evidence="3 4">Decapping enzyme that remove the protective 5'-cap from both host and viral mRNAs to commit transcripts for decay by the cellular exonuclease XRN1 (PubMed:17881455, PubMed:35290794). Accelerates viral and cellular mRNA turnover to eliminate competing host mRNAs and allow stage-specific synthesis of viral proteins. Acceleration of the turnover of cellular transcripts may even promote the shutoff of host protein synthesis.</text>
</comment>
<comment type="catalytic activity">
    <reaction evidence="3 4">
        <text>a 5'-end (N(7)-methyl 5'-triphosphoguanosine)-guanosine in mRNA + H2O = a 5'-end phospho-guanosine in mRNA + N(7)-methyl-GDP + 2 H(+)</text>
        <dbReference type="Rhea" id="RHEA:60872"/>
        <dbReference type="Rhea" id="RHEA-COMP:15683"/>
        <dbReference type="Rhea" id="RHEA-COMP:15687"/>
        <dbReference type="ChEBI" id="CHEBI:15377"/>
        <dbReference type="ChEBI" id="CHEBI:15378"/>
        <dbReference type="ChEBI" id="CHEBI:63714"/>
        <dbReference type="ChEBI" id="CHEBI:143975"/>
        <dbReference type="ChEBI" id="CHEBI:143979"/>
    </reaction>
</comment>
<comment type="cofactor">
    <cofactor evidence="4">
        <name>Mg(2+)</name>
        <dbReference type="ChEBI" id="CHEBI:18420"/>
    </cofactor>
    <cofactor evidence="4">
        <name>Mn(2+)</name>
        <dbReference type="ChEBI" id="CHEBI:29035"/>
    </cofactor>
</comment>
<comment type="induction">
    <text>Expressed in the early phase of the viral replicative cycle.</text>
</comment>
<comment type="similarity">
    <text evidence="5">Belongs to the Nudix hydrolase family.</text>
</comment>
<keyword id="KW-0002">3D-structure</keyword>
<keyword id="KW-0378">Hydrolase</keyword>
<keyword id="KW-0460">Magnesium</keyword>
<keyword id="KW-0464">Manganese</keyword>
<keyword id="KW-0479">Metal-binding</keyword>
<keyword id="KW-1185">Reference proteome</keyword>
<reference key="1">
    <citation type="journal article" date="1986" name="Virology">
        <title>Nucleotide sequence and genetic map of the 16-kb vaccinia virus HindIII D fragment.</title>
        <authorList>
            <person name="Niles E.G."/>
            <person name="Condit R.C."/>
            <person name="Caro P."/>
            <person name="Davidson K."/>
            <person name="Matusick L."/>
            <person name="Seto J."/>
        </authorList>
    </citation>
    <scope>NUCLEOTIDE SEQUENCE [GENOMIC DNA]</scope>
</reference>
<reference key="2">
    <citation type="submission" date="2003-02" db="EMBL/GenBank/DDBJ databases">
        <title>Sequencing of the coding region of Vaccinia-WR to an average 9-fold redundancy and an error rate of 0.16/10kb.</title>
        <authorList>
            <person name="Esposito J.J."/>
            <person name="Frace A.M."/>
            <person name="Sammons S.A."/>
            <person name="Olsen-Rasmussen M."/>
            <person name="Osborne J."/>
            <person name="Wohlhueter R."/>
        </authorList>
    </citation>
    <scope>NUCLEOTIDE SEQUENCE [LARGE SCALE GENOMIC DNA]</scope>
</reference>
<reference key="3">
    <citation type="journal article" date="2007" name="J. Virol.">
        <title>Characterization of a second vaccinia virus mRNA-decapping enzyme conserved in poxviruses.</title>
        <authorList>
            <person name="Parrish S."/>
            <person name="Moss B."/>
        </authorList>
    </citation>
    <scope>CHARACTERIZATION</scope>
    <scope>MUTAGENESIS OF GLU-126 AND 129-GLU-GLU-130</scope>
    <scope>FUNCTION</scope>
    <scope>CATALYTIC ACTIVITY</scope>
</reference>
<reference key="4">
    <citation type="journal article" date="2022" name="Structure">
        <title>Structure of the poxvirus decapping enzyme D9 reveals its mechanism of cap recognition and catalysis.</title>
        <authorList>
            <person name="Peters J.K."/>
            <person name="Tibble R.W."/>
            <person name="Warminski M."/>
            <person name="Jemielity J."/>
            <person name="Gross J.D."/>
        </authorList>
    </citation>
    <scope>X-RAY CRYSTALLOGRAPHY (1.70 ANGSTROMS) IN COMPLEX WITH MAGNESIUM AND N(7)-METHYL-GTP</scope>
    <scope>FUNCTION</scope>
    <scope>CATALYTIC ACTIVITY</scope>
    <scope>MUTAGENESIS OF PHE-54 AND TYR-158</scope>
    <scope>COFACTOR</scope>
</reference>
<proteinExistence type="evidence at protein level"/>
<name>PG121_VACCW</name>
<organismHost>
    <name type="scientific">Bos taurus</name>
    <name type="common">Bovine</name>
    <dbReference type="NCBI Taxonomy" id="9913"/>
</organismHost>
<sequence>MGITMDEEVIFETPRELISIKRIKDIPRSKDTHVFAACITSDGYPLIGARRTSFAFQAILSQQNSDSIFRVSTKLLRFMYYNELREIFRRLRKGSINNIDPHFEELILLGGKLDKKESIKDCLRRELKEESDERITVKEFGNVILKLTTRDKLFNKVYIGYCMACFINQSLEDLSHTSIYNVEIRKIKSLNDCINDDKYEYLSYIYNMLVNSK</sequence>